<gene>
    <name evidence="1" type="primary">udgB</name>
    <name type="ordered locus">MT1297.1</name>
</gene>
<sequence length="268" mass="28500">MHPKTGRAFRSPVEPGSGWPGDPATPQTPVAADAAQVSALAGGAGSICELNALISVCRACPRLVSWREEVAVVKRRAFADQPYWGRPVPGWGSKRPRLLILGLAPAAHGANRTGRMFTGDRSGDQLYAALHRAGLVNSPVSVDAADGLRANRIRITAPVRCAPPGNSPTPAERLTCSPWLNAEWRLVSDHIRAIVALGGFAWQVALRLAGASGTPKPRFGHGVVTELGAGVRLLGCYHPSQQNMFTGRLTPTMLDDIFREAKKLAGIE</sequence>
<name>UDGB_MYCTO</name>
<accession>P9WM52</accession>
<accession>L0T7R5</accession>
<accession>P64785</accession>
<accession>Q11059</accession>
<organism>
    <name type="scientific">Mycobacterium tuberculosis (strain CDC 1551 / Oshkosh)</name>
    <dbReference type="NCBI Taxonomy" id="83331"/>
    <lineage>
        <taxon>Bacteria</taxon>
        <taxon>Bacillati</taxon>
        <taxon>Actinomycetota</taxon>
        <taxon>Actinomycetes</taxon>
        <taxon>Mycobacteriales</taxon>
        <taxon>Mycobacteriaceae</taxon>
        <taxon>Mycobacterium</taxon>
        <taxon>Mycobacterium tuberculosis complex</taxon>
    </lineage>
</organism>
<protein>
    <recommendedName>
        <fullName evidence="1">Type-5 uracil-DNA glycosylase</fullName>
        <ecNumber evidence="1">3.2.2.-</ecNumber>
    </recommendedName>
</protein>
<dbReference type="EC" id="3.2.2.-" evidence="1"/>
<dbReference type="EMBL" id="AE000516">
    <property type="protein sequence ID" value="AAK45556.1"/>
    <property type="molecule type" value="Genomic_DNA"/>
</dbReference>
<dbReference type="PIR" id="C70753">
    <property type="entry name" value="C70753"/>
</dbReference>
<dbReference type="SMR" id="P9WM52"/>
<dbReference type="KEGG" id="mtc:MT1297.1"/>
<dbReference type="HOGENOM" id="CLU_083279_0_0_11"/>
<dbReference type="Proteomes" id="UP000001020">
    <property type="component" value="Chromosome"/>
</dbReference>
<dbReference type="GO" id="GO:0051539">
    <property type="term" value="F:4 iron, 4 sulfur cluster binding"/>
    <property type="evidence" value="ECO:0007669"/>
    <property type="project" value="UniProtKB-KW"/>
</dbReference>
<dbReference type="GO" id="GO:0033958">
    <property type="term" value="F:DNA-deoxyinosine glycosylase activity"/>
    <property type="evidence" value="ECO:0007669"/>
    <property type="project" value="InterPro"/>
</dbReference>
<dbReference type="GO" id="GO:0046872">
    <property type="term" value="F:metal ion binding"/>
    <property type="evidence" value="ECO:0007669"/>
    <property type="project" value="UniProtKB-KW"/>
</dbReference>
<dbReference type="GO" id="GO:0004844">
    <property type="term" value="F:uracil DNA N-glycosylase activity"/>
    <property type="evidence" value="ECO:0007669"/>
    <property type="project" value="InterPro"/>
</dbReference>
<dbReference type="GO" id="GO:0006284">
    <property type="term" value="P:base-excision repair"/>
    <property type="evidence" value="ECO:0007669"/>
    <property type="project" value="InterPro"/>
</dbReference>
<dbReference type="CDD" id="cd10031">
    <property type="entry name" value="UDG-F5_TTUDGB_like"/>
    <property type="match status" value="1"/>
</dbReference>
<dbReference type="Gene3D" id="3.40.470.10">
    <property type="entry name" value="Uracil-DNA glycosylase-like domain"/>
    <property type="match status" value="1"/>
</dbReference>
<dbReference type="InterPro" id="IPR051536">
    <property type="entry name" value="UDG_Type-4/5"/>
</dbReference>
<dbReference type="InterPro" id="IPR044147">
    <property type="entry name" value="UdgB-like"/>
</dbReference>
<dbReference type="InterPro" id="IPR005122">
    <property type="entry name" value="Uracil-DNA_glycosylase-like"/>
</dbReference>
<dbReference type="InterPro" id="IPR036895">
    <property type="entry name" value="Uracil-DNA_glycosylase-like_sf"/>
</dbReference>
<dbReference type="PANTHER" id="PTHR33693">
    <property type="entry name" value="TYPE-5 URACIL-DNA GLYCOSYLASE"/>
    <property type="match status" value="1"/>
</dbReference>
<dbReference type="PANTHER" id="PTHR33693:SF3">
    <property type="entry name" value="TYPE-5 URACIL-DNA GLYCOSYLASE"/>
    <property type="match status" value="1"/>
</dbReference>
<dbReference type="Pfam" id="PF03167">
    <property type="entry name" value="UDG"/>
    <property type="match status" value="1"/>
</dbReference>
<dbReference type="SMART" id="SM00986">
    <property type="entry name" value="UDG"/>
    <property type="match status" value="1"/>
</dbReference>
<dbReference type="SMART" id="SM00987">
    <property type="entry name" value="UreE_C"/>
    <property type="match status" value="1"/>
</dbReference>
<dbReference type="SUPFAM" id="SSF52141">
    <property type="entry name" value="Uracil-DNA glycosylase-like"/>
    <property type="match status" value="1"/>
</dbReference>
<evidence type="ECO:0000250" key="1">
    <source>
        <dbReference type="UniProtKB" id="P9WM53"/>
    </source>
</evidence>
<evidence type="ECO:0000250" key="2">
    <source>
        <dbReference type="UniProtKB" id="Q5SJ65"/>
    </source>
</evidence>
<evidence type="ECO:0000256" key="3">
    <source>
        <dbReference type="SAM" id="MobiDB-lite"/>
    </source>
</evidence>
<evidence type="ECO:0000305" key="4"/>
<keyword id="KW-0004">4Fe-4S</keyword>
<keyword id="KW-0227">DNA damage</keyword>
<keyword id="KW-0234">DNA repair</keyword>
<keyword id="KW-0378">Hydrolase</keyword>
<keyword id="KW-0408">Iron</keyword>
<keyword id="KW-0411">Iron-sulfur</keyword>
<keyword id="KW-0479">Metal-binding</keyword>
<keyword id="KW-1185">Reference proteome</keyword>
<comment type="function">
    <text evidence="1">DNA glycosylase with broad substrate specificity.</text>
</comment>
<comment type="similarity">
    <text evidence="4">Belongs to the uracil-DNA glycosylase (UDG) superfamily. Type 5 (UDGb) family.</text>
</comment>
<reference key="1">
    <citation type="journal article" date="2002" name="J. Bacteriol.">
        <title>Whole-genome comparison of Mycobacterium tuberculosis clinical and laboratory strains.</title>
        <authorList>
            <person name="Fleischmann R.D."/>
            <person name="Alland D."/>
            <person name="Eisen J.A."/>
            <person name="Carpenter L."/>
            <person name="White O."/>
            <person name="Peterson J.D."/>
            <person name="DeBoy R.T."/>
            <person name="Dodson R.J."/>
            <person name="Gwinn M.L."/>
            <person name="Haft D.H."/>
            <person name="Hickey E.K."/>
            <person name="Kolonay J.F."/>
            <person name="Nelson W.C."/>
            <person name="Umayam L.A."/>
            <person name="Ermolaeva M.D."/>
            <person name="Salzberg S.L."/>
            <person name="Delcher A."/>
            <person name="Utterback T.R."/>
            <person name="Weidman J.F."/>
            <person name="Khouri H.M."/>
            <person name="Gill J."/>
            <person name="Mikula A."/>
            <person name="Bishai W."/>
            <person name="Jacobs W.R. Jr."/>
            <person name="Venter J.C."/>
            <person name="Fraser C.M."/>
        </authorList>
    </citation>
    <scope>NUCLEOTIDE SEQUENCE [LARGE SCALE GENOMIC DNA]</scope>
    <source>
        <strain>CDC 1551 / Oshkosh</strain>
    </source>
</reference>
<proteinExistence type="inferred from homology"/>
<feature type="chain" id="PRO_0000427364" description="Type-5 uracil-DNA glycosylase">
    <location>
        <begin position="1"/>
        <end position="268"/>
    </location>
</feature>
<feature type="region of interest" description="Disordered" evidence="3">
    <location>
        <begin position="1"/>
        <end position="29"/>
    </location>
</feature>
<feature type="binding site" evidence="2">
    <location>
        <position position="57"/>
    </location>
    <ligand>
        <name>[4Fe-4S] cluster</name>
        <dbReference type="ChEBI" id="CHEBI:49883"/>
    </ligand>
</feature>
<feature type="binding site" evidence="2">
    <location>
        <position position="60"/>
    </location>
    <ligand>
        <name>[4Fe-4S] cluster</name>
        <dbReference type="ChEBI" id="CHEBI:49883"/>
    </ligand>
</feature>
<feature type="binding site" evidence="2">
    <location>
        <position position="161"/>
    </location>
    <ligand>
        <name>[4Fe-4S] cluster</name>
        <dbReference type="ChEBI" id="CHEBI:49883"/>
    </ligand>
</feature>
<feature type="binding site" evidence="2">
    <location>
        <position position="176"/>
    </location>
    <ligand>
        <name>[4Fe-4S] cluster</name>
        <dbReference type="ChEBI" id="CHEBI:49883"/>
    </ligand>
</feature>